<feature type="transit peptide" description="Mitochondrion" evidence="1">
    <location>
        <begin position="1"/>
        <end position="46"/>
    </location>
</feature>
<feature type="chain" id="PRO_0000030558" description="Large ribosomal subunit protein mL40">
    <location>
        <begin position="47"/>
        <end position="206"/>
    </location>
</feature>
<feature type="region of interest" description="Disordered" evidence="2">
    <location>
        <begin position="168"/>
        <end position="192"/>
    </location>
</feature>
<feature type="sequence variant" id="VAR_061809" description="In dbSNP:rs1128399." evidence="6">
    <original>L</original>
    <variation>P</variation>
    <location>
        <position position="11"/>
    </location>
</feature>
<feature type="sequence variant" id="VAR_016088" description="In dbSNP:rs7575." evidence="6">
    <original>R</original>
    <variation>H</variation>
    <location>
        <position position="129"/>
    </location>
</feature>
<feature type="turn" evidence="15">
    <location>
        <begin position="92"/>
        <end position="95"/>
    </location>
</feature>
<feature type="helix" evidence="14">
    <location>
        <begin position="108"/>
        <end position="153"/>
    </location>
</feature>
<feature type="turn" evidence="14">
    <location>
        <begin position="155"/>
        <end position="157"/>
    </location>
</feature>
<feature type="helix" evidence="14">
    <location>
        <begin position="158"/>
        <end position="161"/>
    </location>
</feature>
<feature type="strand" evidence="13">
    <location>
        <begin position="166"/>
        <end position="168"/>
    </location>
</feature>
<feature type="strand" evidence="14">
    <location>
        <begin position="177"/>
        <end position="179"/>
    </location>
</feature>
<gene>
    <name type="primary">MRPL40</name>
    <name type="synonym">NLVCF</name>
    <name type="synonym">URIM</name>
</gene>
<proteinExistence type="evidence at protein level"/>
<keyword id="KW-0002">3D-structure</keyword>
<keyword id="KW-0496">Mitochondrion</keyword>
<keyword id="KW-1267">Proteomics identification</keyword>
<keyword id="KW-1185">Reference proteome</keyword>
<keyword id="KW-0687">Ribonucleoprotein</keyword>
<keyword id="KW-0689">Ribosomal protein</keyword>
<keyword id="KW-0809">Transit peptide</keyword>
<comment type="subunit">
    <text evidence="3 4 5">Component of the mitochondrial large ribosomal subunit (mt-LSU) (PubMed:25278503, PubMed:25838379, PubMed:28892042). Mature mammalian 55S mitochondrial ribosomes consist of a small (28S) and a large (39S) subunit. The 28S small subunit contains a 12S ribosomal RNA (12S mt-rRNA) and 30 different proteins. The 39S large subunit contains a 16S rRNA (16S mt-rRNA), a copy of mitochondrial valine transfer RNA (mt-tRNA(Val)), which plays an integral structural role, and 52 different proteins. mL40 binds to the major groove of the anticodon stem of mt-tRNA(Val) in the central protuberance.</text>
</comment>
<comment type="interaction">
    <interactant intactId="EBI-1053902">
        <id>Q9NQ50</id>
    </interactant>
    <interactant intactId="EBI-3867333">
        <id>A8MQ03</id>
        <label>CYSRT1</label>
    </interactant>
    <organismsDiffer>false</organismsDiffer>
    <experiments>3</experiments>
</comment>
<comment type="interaction">
    <interactant intactId="EBI-1053902">
        <id>Q9NQ50</id>
    </interactant>
    <interactant intactId="EBI-948001">
        <id>Q15323</id>
        <label>KRT31</label>
    </interactant>
    <organismsDiffer>false</organismsDiffer>
    <experiments>3</experiments>
</comment>
<comment type="interaction">
    <interactant intactId="EBI-1053902">
        <id>Q9NQ50</id>
    </interactant>
    <interactant intactId="EBI-9996449">
        <id>Q9BYR8</id>
        <label>KRTAP3-1</label>
    </interactant>
    <organismsDiffer>false</organismsDiffer>
    <experiments>3</experiments>
</comment>
<comment type="interaction">
    <interactant intactId="EBI-1053902">
        <id>Q9NQ50</id>
    </interactant>
    <interactant intactId="EBI-945833">
        <id>Q7Z3S9</id>
        <label>NOTCH2NLA</label>
    </interactant>
    <organismsDiffer>false</organismsDiffer>
    <experiments>3</experiments>
</comment>
<comment type="interaction">
    <interactant intactId="EBI-1053902">
        <id>Q9NQ50</id>
    </interactant>
    <interactant intactId="EBI-22310682">
        <id>P0DPK4</id>
        <label>NOTCH2NLC</label>
    </interactant>
    <organismsDiffer>false</organismsDiffer>
    <experiments>3</experiments>
</comment>
<comment type="interaction">
    <interactant intactId="EBI-1053902">
        <id>Q9NQ50</id>
    </interactant>
    <interactant intactId="EBI-717422">
        <id>Q12800</id>
        <label>TFCP2</label>
    </interactant>
    <organismsDiffer>false</organismsDiffer>
    <experiments>3</experiments>
</comment>
<comment type="interaction">
    <interactant intactId="EBI-1053902">
        <id>Q9NQ50</id>
    </interactant>
    <interactant intactId="EBI-719493">
        <id>P14373</id>
        <label>TRIM27</label>
    </interactant>
    <organismsDiffer>false</organismsDiffer>
    <experiments>3</experiments>
</comment>
<comment type="subcellular location">
    <subcellularLocation>
        <location evidence="3 4 5">Mitochondrion</location>
    </subcellularLocation>
</comment>
<comment type="tissue specificity">
    <text evidence="6">Ubiquitous.</text>
</comment>
<comment type="similarity">
    <text evidence="8">Belongs to the mitochondrion-specific ribosomal protein mL40 family.</text>
</comment>
<name>RM40_HUMAN</name>
<organism>
    <name type="scientific">Homo sapiens</name>
    <name type="common">Human</name>
    <dbReference type="NCBI Taxonomy" id="9606"/>
    <lineage>
        <taxon>Eukaryota</taxon>
        <taxon>Metazoa</taxon>
        <taxon>Chordata</taxon>
        <taxon>Craniata</taxon>
        <taxon>Vertebrata</taxon>
        <taxon>Euteleostomi</taxon>
        <taxon>Mammalia</taxon>
        <taxon>Eutheria</taxon>
        <taxon>Euarchontoglires</taxon>
        <taxon>Primates</taxon>
        <taxon>Haplorrhini</taxon>
        <taxon>Catarrhini</taxon>
        <taxon>Hominidae</taxon>
        <taxon>Homo</taxon>
    </lineage>
</organism>
<evidence type="ECO:0000250" key="1">
    <source>
        <dbReference type="UniProtKB" id="P83565"/>
    </source>
</evidence>
<evidence type="ECO:0000256" key="2">
    <source>
        <dbReference type="SAM" id="MobiDB-lite"/>
    </source>
</evidence>
<evidence type="ECO:0000269" key="3">
    <source>
    </source>
</evidence>
<evidence type="ECO:0000269" key="4">
    <source>
    </source>
</evidence>
<evidence type="ECO:0000269" key="5">
    <source>
    </source>
</evidence>
<evidence type="ECO:0000269" key="6">
    <source>
    </source>
</evidence>
<evidence type="ECO:0000303" key="7">
    <source>
    </source>
</evidence>
<evidence type="ECO:0000305" key="8"/>
<evidence type="ECO:0007744" key="9">
    <source>
        <dbReference type="PDB" id="3J7Y"/>
    </source>
</evidence>
<evidence type="ECO:0007744" key="10">
    <source>
        <dbReference type="PDB" id="3J9M"/>
    </source>
</evidence>
<evidence type="ECO:0007744" key="11">
    <source>
        <dbReference type="PDB" id="5OOL"/>
    </source>
</evidence>
<evidence type="ECO:0007744" key="12">
    <source>
        <dbReference type="PDB" id="5OOM"/>
    </source>
</evidence>
<evidence type="ECO:0007829" key="13">
    <source>
        <dbReference type="PDB" id="5OOL"/>
    </source>
</evidence>
<evidence type="ECO:0007829" key="14">
    <source>
        <dbReference type="PDB" id="7OF0"/>
    </source>
</evidence>
<evidence type="ECO:0007829" key="15">
    <source>
        <dbReference type="PDB" id="8QU5"/>
    </source>
</evidence>
<dbReference type="EMBL" id="AF034091">
    <property type="protein sequence ID" value="AAC70904.1"/>
    <property type="molecule type" value="mRNA"/>
</dbReference>
<dbReference type="EMBL" id="AJ295637">
    <property type="protein sequence ID" value="CAC00535.1"/>
    <property type="molecule type" value="mRNA"/>
</dbReference>
<dbReference type="EMBL" id="CR456532">
    <property type="protein sequence ID" value="CAG30418.1"/>
    <property type="molecule type" value="mRNA"/>
</dbReference>
<dbReference type="EMBL" id="AK123768">
    <property type="protein sequence ID" value="BAG53959.1"/>
    <property type="molecule type" value="mRNA"/>
</dbReference>
<dbReference type="EMBL" id="CH471176">
    <property type="protein sequence ID" value="EAX03042.1"/>
    <property type="molecule type" value="Genomic_DNA"/>
</dbReference>
<dbReference type="EMBL" id="BC009707">
    <property type="protein sequence ID" value="AAH09707.1"/>
    <property type="molecule type" value="mRNA"/>
</dbReference>
<dbReference type="CCDS" id="CCDS13760.1"/>
<dbReference type="RefSeq" id="NP_003767.2">
    <property type="nucleotide sequence ID" value="NM_003776.3"/>
</dbReference>
<dbReference type="PDB" id="3J7Y">
    <property type="method" value="EM"/>
    <property type="resolution" value="3.40 A"/>
    <property type="chains" value="8=1-206"/>
</dbReference>
<dbReference type="PDB" id="3J9M">
    <property type="method" value="EM"/>
    <property type="resolution" value="3.50 A"/>
    <property type="chains" value="8=1-206"/>
</dbReference>
<dbReference type="PDB" id="5OOL">
    <property type="method" value="EM"/>
    <property type="resolution" value="3.06 A"/>
    <property type="chains" value="8=1-206"/>
</dbReference>
<dbReference type="PDB" id="5OOM">
    <property type="method" value="EM"/>
    <property type="resolution" value="3.03 A"/>
    <property type="chains" value="8=1-206"/>
</dbReference>
<dbReference type="PDB" id="6I9R">
    <property type="method" value="EM"/>
    <property type="resolution" value="3.90 A"/>
    <property type="chains" value="8=1-206"/>
</dbReference>
<dbReference type="PDB" id="6NU2">
    <property type="method" value="EM"/>
    <property type="resolution" value="3.90 A"/>
    <property type="chains" value="8=83-181"/>
</dbReference>
<dbReference type="PDB" id="6NU3">
    <property type="method" value="EM"/>
    <property type="resolution" value="4.40 A"/>
    <property type="chains" value="8=1-206"/>
</dbReference>
<dbReference type="PDB" id="6VLZ">
    <property type="method" value="EM"/>
    <property type="resolution" value="2.97 A"/>
    <property type="chains" value="8=1-206"/>
</dbReference>
<dbReference type="PDB" id="6VMI">
    <property type="method" value="EM"/>
    <property type="resolution" value="2.96 A"/>
    <property type="chains" value="8=1-206"/>
</dbReference>
<dbReference type="PDB" id="6ZM5">
    <property type="method" value="EM"/>
    <property type="resolution" value="2.89 A"/>
    <property type="chains" value="8=1-206"/>
</dbReference>
<dbReference type="PDB" id="6ZM6">
    <property type="method" value="EM"/>
    <property type="resolution" value="2.59 A"/>
    <property type="chains" value="8=1-206"/>
</dbReference>
<dbReference type="PDB" id="6ZS9">
    <property type="method" value="EM"/>
    <property type="resolution" value="4.00 A"/>
    <property type="chains" value="8=1-206"/>
</dbReference>
<dbReference type="PDB" id="6ZSA">
    <property type="method" value="EM"/>
    <property type="resolution" value="4.00 A"/>
    <property type="chains" value="8=1-206"/>
</dbReference>
<dbReference type="PDB" id="6ZSB">
    <property type="method" value="EM"/>
    <property type="resolution" value="4.50 A"/>
    <property type="chains" value="8=1-206"/>
</dbReference>
<dbReference type="PDB" id="6ZSC">
    <property type="method" value="EM"/>
    <property type="resolution" value="3.50 A"/>
    <property type="chains" value="8=1-206"/>
</dbReference>
<dbReference type="PDB" id="6ZSD">
    <property type="method" value="EM"/>
    <property type="resolution" value="3.70 A"/>
    <property type="chains" value="8=1-206"/>
</dbReference>
<dbReference type="PDB" id="6ZSE">
    <property type="method" value="EM"/>
    <property type="resolution" value="5.00 A"/>
    <property type="chains" value="8=1-206"/>
</dbReference>
<dbReference type="PDB" id="6ZSG">
    <property type="method" value="EM"/>
    <property type="resolution" value="4.00 A"/>
    <property type="chains" value="8=1-206"/>
</dbReference>
<dbReference type="PDB" id="7A5F">
    <property type="method" value="EM"/>
    <property type="resolution" value="4.40 A"/>
    <property type="chains" value="A=1-206"/>
</dbReference>
<dbReference type="PDB" id="7A5G">
    <property type="method" value="EM"/>
    <property type="resolution" value="4.33 A"/>
    <property type="chains" value="A=1-206"/>
</dbReference>
<dbReference type="PDB" id="7A5H">
    <property type="method" value="EM"/>
    <property type="resolution" value="3.30 A"/>
    <property type="chains" value="8=1-206"/>
</dbReference>
<dbReference type="PDB" id="7A5I">
    <property type="method" value="EM"/>
    <property type="resolution" value="3.70 A"/>
    <property type="chains" value="83=1-206"/>
</dbReference>
<dbReference type="PDB" id="7A5J">
    <property type="method" value="EM"/>
    <property type="resolution" value="3.10 A"/>
    <property type="chains" value="8=1-206"/>
</dbReference>
<dbReference type="PDB" id="7A5K">
    <property type="method" value="EM"/>
    <property type="resolution" value="3.70 A"/>
    <property type="chains" value="A=1-206"/>
</dbReference>
<dbReference type="PDB" id="7L08">
    <property type="method" value="EM"/>
    <property type="resolution" value="3.49 A"/>
    <property type="chains" value="8=1-206"/>
</dbReference>
<dbReference type="PDB" id="7L20">
    <property type="method" value="EM"/>
    <property type="resolution" value="3.15 A"/>
    <property type="chains" value="8=1-206"/>
</dbReference>
<dbReference type="PDB" id="7O9K">
    <property type="method" value="EM"/>
    <property type="resolution" value="3.10 A"/>
    <property type="chains" value="8=1-206"/>
</dbReference>
<dbReference type="PDB" id="7O9M">
    <property type="method" value="EM"/>
    <property type="resolution" value="2.50 A"/>
    <property type="chains" value="8=1-206"/>
</dbReference>
<dbReference type="PDB" id="7ODR">
    <property type="method" value="EM"/>
    <property type="resolution" value="2.90 A"/>
    <property type="chains" value="8=1-206"/>
</dbReference>
<dbReference type="PDB" id="7ODS">
    <property type="method" value="EM"/>
    <property type="resolution" value="3.10 A"/>
    <property type="chains" value="8=1-206"/>
</dbReference>
<dbReference type="PDB" id="7ODT">
    <property type="method" value="EM"/>
    <property type="resolution" value="3.10 A"/>
    <property type="chains" value="8=1-206"/>
</dbReference>
<dbReference type="PDB" id="7OF0">
    <property type="method" value="EM"/>
    <property type="resolution" value="2.20 A"/>
    <property type="chains" value="8=1-206"/>
</dbReference>
<dbReference type="PDB" id="7OF2">
    <property type="method" value="EM"/>
    <property type="resolution" value="2.70 A"/>
    <property type="chains" value="8=1-206"/>
</dbReference>
<dbReference type="PDB" id="7OF3">
    <property type="method" value="EM"/>
    <property type="resolution" value="2.70 A"/>
    <property type="chains" value="8=1-206"/>
</dbReference>
<dbReference type="PDB" id="7OF4">
    <property type="method" value="EM"/>
    <property type="resolution" value="2.70 A"/>
    <property type="chains" value="8=1-206"/>
</dbReference>
<dbReference type="PDB" id="7OF5">
    <property type="method" value="EM"/>
    <property type="resolution" value="2.90 A"/>
    <property type="chains" value="8=1-206"/>
</dbReference>
<dbReference type="PDB" id="7OF6">
    <property type="method" value="EM"/>
    <property type="resolution" value="2.60 A"/>
    <property type="chains" value="8=1-206"/>
</dbReference>
<dbReference type="PDB" id="7OF7">
    <property type="method" value="EM"/>
    <property type="resolution" value="2.50 A"/>
    <property type="chains" value="8=1-206"/>
</dbReference>
<dbReference type="PDB" id="7OG4">
    <property type="method" value="EM"/>
    <property type="resolution" value="3.80 A"/>
    <property type="chains" value="8=1-206"/>
</dbReference>
<dbReference type="PDB" id="7OI7">
    <property type="method" value="EM"/>
    <property type="resolution" value="3.50 A"/>
    <property type="chains" value="8=1-206"/>
</dbReference>
<dbReference type="PDB" id="7OI8">
    <property type="method" value="EM"/>
    <property type="resolution" value="3.50 A"/>
    <property type="chains" value="8=1-206"/>
</dbReference>
<dbReference type="PDB" id="7OI9">
    <property type="method" value="EM"/>
    <property type="resolution" value="3.30 A"/>
    <property type="chains" value="8=1-206"/>
</dbReference>
<dbReference type="PDB" id="7OIA">
    <property type="method" value="EM"/>
    <property type="resolution" value="3.20 A"/>
    <property type="chains" value="8=1-206"/>
</dbReference>
<dbReference type="PDB" id="7OIB">
    <property type="method" value="EM"/>
    <property type="resolution" value="3.30 A"/>
    <property type="chains" value="8=1-206"/>
</dbReference>
<dbReference type="PDB" id="7OIC">
    <property type="method" value="EM"/>
    <property type="resolution" value="3.10 A"/>
    <property type="chains" value="8=1-206"/>
</dbReference>
<dbReference type="PDB" id="7OID">
    <property type="method" value="EM"/>
    <property type="resolution" value="3.70 A"/>
    <property type="chains" value="8=1-206"/>
</dbReference>
<dbReference type="PDB" id="7OIE">
    <property type="method" value="EM"/>
    <property type="resolution" value="3.50 A"/>
    <property type="chains" value="8=1-206"/>
</dbReference>
<dbReference type="PDB" id="7PD3">
    <property type="method" value="EM"/>
    <property type="resolution" value="3.40 A"/>
    <property type="chains" value="8=1-206"/>
</dbReference>
<dbReference type="PDB" id="7PO4">
    <property type="method" value="EM"/>
    <property type="resolution" value="2.56 A"/>
    <property type="chains" value="8=1-206"/>
</dbReference>
<dbReference type="PDB" id="7QI4">
    <property type="method" value="EM"/>
    <property type="resolution" value="2.21 A"/>
    <property type="chains" value="8=1-206"/>
</dbReference>
<dbReference type="PDB" id="7QI5">
    <property type="method" value="EM"/>
    <property type="resolution" value="2.63 A"/>
    <property type="chains" value="8=1-206"/>
</dbReference>
<dbReference type="PDB" id="7QI6">
    <property type="method" value="EM"/>
    <property type="resolution" value="2.98 A"/>
    <property type="chains" value="8=1-206"/>
</dbReference>
<dbReference type="PDB" id="8ANY">
    <property type="method" value="EM"/>
    <property type="resolution" value="2.85 A"/>
    <property type="chains" value="8=1-206"/>
</dbReference>
<dbReference type="PDB" id="8K2A">
    <property type="method" value="EM"/>
    <property type="resolution" value="2.90 A"/>
    <property type="chains" value="Ln=1-206"/>
</dbReference>
<dbReference type="PDB" id="8K2B">
    <property type="method" value="EM"/>
    <property type="resolution" value="3.40 A"/>
    <property type="chains" value="Ln=1-206"/>
</dbReference>
<dbReference type="PDB" id="8OIR">
    <property type="method" value="EM"/>
    <property type="resolution" value="3.10 A"/>
    <property type="chains" value="Bp=1-206"/>
</dbReference>
<dbReference type="PDB" id="8OIT">
    <property type="method" value="EM"/>
    <property type="resolution" value="2.90 A"/>
    <property type="chains" value="Bp=1-206"/>
</dbReference>
<dbReference type="PDB" id="8PK0">
    <property type="method" value="EM"/>
    <property type="resolution" value="3.03 A"/>
    <property type="chains" value="8=1-206"/>
</dbReference>
<dbReference type="PDB" id="8QSJ">
    <property type="method" value="EM"/>
    <property type="resolution" value="3.00 A"/>
    <property type="chains" value="8=1-206"/>
</dbReference>
<dbReference type="PDB" id="8QU5">
    <property type="method" value="EM"/>
    <property type="resolution" value="2.42 A"/>
    <property type="chains" value="8=1-206"/>
</dbReference>
<dbReference type="PDB" id="8RRI">
    <property type="method" value="EM"/>
    <property type="resolution" value="2.40 A"/>
    <property type="chains" value="8=1-206"/>
</dbReference>
<dbReference type="PDB" id="8XT0">
    <property type="method" value="EM"/>
    <property type="resolution" value="3.20 A"/>
    <property type="chains" value="Ln=1-206"/>
</dbReference>
<dbReference type="PDB" id="8XT1">
    <property type="method" value="EM"/>
    <property type="resolution" value="3.10 A"/>
    <property type="chains" value="Ln=1-206"/>
</dbReference>
<dbReference type="PDB" id="8XT2">
    <property type="method" value="EM"/>
    <property type="resolution" value="3.30 A"/>
    <property type="chains" value="Ln=1-206"/>
</dbReference>
<dbReference type="PDB" id="8XT3">
    <property type="method" value="EM"/>
    <property type="resolution" value="3.10 A"/>
    <property type="chains" value="Ln=1-206"/>
</dbReference>
<dbReference type="PDBsum" id="3J7Y"/>
<dbReference type="PDBsum" id="3J9M"/>
<dbReference type="PDBsum" id="5OOL"/>
<dbReference type="PDBsum" id="5OOM"/>
<dbReference type="PDBsum" id="6I9R"/>
<dbReference type="PDBsum" id="6NU2"/>
<dbReference type="PDBsum" id="6NU3"/>
<dbReference type="PDBsum" id="6VLZ"/>
<dbReference type="PDBsum" id="6VMI"/>
<dbReference type="PDBsum" id="6ZM5"/>
<dbReference type="PDBsum" id="6ZM6"/>
<dbReference type="PDBsum" id="6ZS9"/>
<dbReference type="PDBsum" id="6ZSA"/>
<dbReference type="PDBsum" id="6ZSB"/>
<dbReference type="PDBsum" id="6ZSC"/>
<dbReference type="PDBsum" id="6ZSD"/>
<dbReference type="PDBsum" id="6ZSE"/>
<dbReference type="PDBsum" id="6ZSG"/>
<dbReference type="PDBsum" id="7A5F"/>
<dbReference type="PDBsum" id="7A5G"/>
<dbReference type="PDBsum" id="7A5H"/>
<dbReference type="PDBsum" id="7A5I"/>
<dbReference type="PDBsum" id="7A5J"/>
<dbReference type="PDBsum" id="7A5K"/>
<dbReference type="PDBsum" id="7L08"/>
<dbReference type="PDBsum" id="7L20"/>
<dbReference type="PDBsum" id="7O9K"/>
<dbReference type="PDBsum" id="7O9M"/>
<dbReference type="PDBsum" id="7ODR"/>
<dbReference type="PDBsum" id="7ODS"/>
<dbReference type="PDBsum" id="7ODT"/>
<dbReference type="PDBsum" id="7OF0"/>
<dbReference type="PDBsum" id="7OF2"/>
<dbReference type="PDBsum" id="7OF3"/>
<dbReference type="PDBsum" id="7OF4"/>
<dbReference type="PDBsum" id="7OF5"/>
<dbReference type="PDBsum" id="7OF6"/>
<dbReference type="PDBsum" id="7OF7"/>
<dbReference type="PDBsum" id="7OG4"/>
<dbReference type="PDBsum" id="7OI7"/>
<dbReference type="PDBsum" id="7OI8"/>
<dbReference type="PDBsum" id="7OI9"/>
<dbReference type="PDBsum" id="7OIA"/>
<dbReference type="PDBsum" id="7OIB"/>
<dbReference type="PDBsum" id="7OIC"/>
<dbReference type="PDBsum" id="7OID"/>
<dbReference type="PDBsum" id="7OIE"/>
<dbReference type="PDBsum" id="7PD3"/>
<dbReference type="PDBsum" id="7PO4"/>
<dbReference type="PDBsum" id="7QI4"/>
<dbReference type="PDBsum" id="7QI5"/>
<dbReference type="PDBsum" id="7QI6"/>
<dbReference type="PDBsum" id="8ANY"/>
<dbReference type="PDBsum" id="8K2A"/>
<dbReference type="PDBsum" id="8K2B"/>
<dbReference type="PDBsum" id="8OIR"/>
<dbReference type="PDBsum" id="8OIT"/>
<dbReference type="PDBsum" id="8PK0"/>
<dbReference type="PDBsum" id="8QSJ"/>
<dbReference type="PDBsum" id="8QU5"/>
<dbReference type="PDBsum" id="8RRI"/>
<dbReference type="PDBsum" id="8XT0"/>
<dbReference type="PDBsum" id="8XT1"/>
<dbReference type="PDBsum" id="8XT2"/>
<dbReference type="PDBsum" id="8XT3"/>
<dbReference type="EMDB" id="EMD-0514"/>
<dbReference type="EMDB" id="EMD-0515"/>
<dbReference type="EMDB" id="EMD-11278"/>
<dbReference type="EMDB" id="EMD-11279"/>
<dbReference type="EMDB" id="EMD-11390"/>
<dbReference type="EMDB" id="EMD-11391"/>
<dbReference type="EMDB" id="EMD-11392"/>
<dbReference type="EMDB" id="EMD-11393"/>
<dbReference type="EMDB" id="EMD-11394"/>
<dbReference type="EMDB" id="EMD-11395"/>
<dbReference type="EMDB" id="EMD-11397"/>
<dbReference type="EMDB" id="EMD-11641"/>
<dbReference type="EMDB" id="EMD-11642"/>
<dbReference type="EMDB" id="EMD-11643"/>
<dbReference type="EMDB" id="EMD-11644"/>
<dbReference type="EMDB" id="EMD-11645"/>
<dbReference type="EMDB" id="EMD-11646"/>
<dbReference type="EMDB" id="EMD-12763"/>
<dbReference type="EMDB" id="EMD-12764"/>
<dbReference type="EMDB" id="EMD-12845"/>
<dbReference type="EMDB" id="EMD-12846"/>
<dbReference type="EMDB" id="EMD-12847"/>
<dbReference type="EMDB" id="EMD-12865"/>
<dbReference type="EMDB" id="EMD-12867"/>
<dbReference type="EMDB" id="EMD-12868"/>
<dbReference type="EMDB" id="EMD-12869"/>
<dbReference type="EMDB" id="EMD-12870"/>
<dbReference type="EMDB" id="EMD-12871"/>
<dbReference type="EMDB" id="EMD-12872"/>
<dbReference type="EMDB" id="EMD-12877"/>
<dbReference type="EMDB" id="EMD-12920"/>
<dbReference type="EMDB" id="EMD-12921"/>
<dbReference type="EMDB" id="EMD-12922"/>
<dbReference type="EMDB" id="EMD-12923"/>
<dbReference type="EMDB" id="EMD-12924"/>
<dbReference type="EMDB" id="EMD-12925"/>
<dbReference type="EMDB" id="EMD-12926"/>
<dbReference type="EMDB" id="EMD-12927"/>
<dbReference type="EMDB" id="EMD-13329"/>
<dbReference type="EMDB" id="EMD-13562"/>
<dbReference type="EMDB" id="EMD-13980"/>
<dbReference type="EMDB" id="EMD-13981"/>
<dbReference type="EMDB" id="EMD-13982"/>
<dbReference type="EMDB" id="EMD-15544"/>
<dbReference type="EMDB" id="EMD-16897"/>
<dbReference type="EMDB" id="EMD-16899"/>
<dbReference type="EMDB" id="EMD-17719"/>
<dbReference type="EMDB" id="EMD-19460"/>
<dbReference type="EMDB" id="EMD-21233"/>
<dbReference type="EMDB" id="EMD-21242"/>
<dbReference type="EMDB" id="EMD-23096"/>
<dbReference type="EMDB" id="EMD-23121"/>
<dbReference type="EMDB" id="EMD-36836"/>
<dbReference type="EMDB" id="EMD-36837"/>
<dbReference type="EMDB" id="EMD-3842"/>
<dbReference type="EMDB" id="EMD-3843"/>
<dbReference type="EMDB" id="EMD-38632"/>
<dbReference type="EMDB" id="EMD-38633"/>
<dbReference type="EMDB" id="EMD-38634"/>
<dbReference type="EMDB" id="EMD-38635"/>
<dbReference type="EMDB" id="EMD-4434"/>
<dbReference type="SMR" id="Q9NQ50"/>
<dbReference type="BioGRID" id="122364">
    <property type="interactions" value="181"/>
</dbReference>
<dbReference type="ComplexPortal" id="CPX-5226">
    <property type="entry name" value="39S mitochondrial large ribosomal subunit"/>
</dbReference>
<dbReference type="CORUM" id="Q9NQ50"/>
<dbReference type="FunCoup" id="Q9NQ50">
    <property type="interactions" value="2280"/>
</dbReference>
<dbReference type="IntAct" id="Q9NQ50">
    <property type="interactions" value="80"/>
</dbReference>
<dbReference type="MINT" id="Q9NQ50"/>
<dbReference type="STRING" id="9606.ENSP00000333401"/>
<dbReference type="GlyGen" id="Q9NQ50">
    <property type="glycosylation" value="1 site, 1 O-linked glycan (1 site)"/>
</dbReference>
<dbReference type="iPTMnet" id="Q9NQ50"/>
<dbReference type="MetOSite" id="Q9NQ50"/>
<dbReference type="PhosphoSitePlus" id="Q9NQ50"/>
<dbReference type="BioMuta" id="MRPL40"/>
<dbReference type="DMDM" id="21263795"/>
<dbReference type="jPOST" id="Q9NQ50"/>
<dbReference type="MassIVE" id="Q9NQ50"/>
<dbReference type="PaxDb" id="9606-ENSP00000333401"/>
<dbReference type="PeptideAtlas" id="Q9NQ50"/>
<dbReference type="ProteomicsDB" id="82081"/>
<dbReference type="Pumba" id="Q9NQ50"/>
<dbReference type="TopDownProteomics" id="Q9NQ50"/>
<dbReference type="Antibodypedia" id="209">
    <property type="antibodies" value="136 antibodies from 24 providers"/>
</dbReference>
<dbReference type="DNASU" id="64976"/>
<dbReference type="Ensembl" id="ENST00000333130.4">
    <property type="protein sequence ID" value="ENSP00000333401.3"/>
    <property type="gene ID" value="ENSG00000185608.9"/>
</dbReference>
<dbReference type="GeneID" id="64976"/>
<dbReference type="KEGG" id="hsa:64976"/>
<dbReference type="MANE-Select" id="ENST00000333130.4">
    <property type="protein sequence ID" value="ENSP00000333401.3"/>
    <property type="RefSeq nucleotide sequence ID" value="NM_003776.4"/>
    <property type="RefSeq protein sequence ID" value="NP_003767.2"/>
</dbReference>
<dbReference type="UCSC" id="uc002zpg.4">
    <property type="organism name" value="human"/>
</dbReference>
<dbReference type="AGR" id="HGNC:14491"/>
<dbReference type="CTD" id="64976"/>
<dbReference type="DisGeNET" id="64976"/>
<dbReference type="GeneCards" id="MRPL40"/>
<dbReference type="HGNC" id="HGNC:14491">
    <property type="gene designation" value="MRPL40"/>
</dbReference>
<dbReference type="HPA" id="ENSG00000185608">
    <property type="expression patterns" value="Low tissue specificity"/>
</dbReference>
<dbReference type="MalaCards" id="MRPL40"/>
<dbReference type="MIM" id="605089">
    <property type="type" value="gene"/>
</dbReference>
<dbReference type="neXtProt" id="NX_Q9NQ50"/>
<dbReference type="OpenTargets" id="ENSG00000185608"/>
<dbReference type="PharmGKB" id="PA30972"/>
<dbReference type="VEuPathDB" id="HostDB:ENSG00000185608"/>
<dbReference type="eggNOG" id="KOG4778">
    <property type="taxonomic scope" value="Eukaryota"/>
</dbReference>
<dbReference type="GeneTree" id="ENSGT00390000010239"/>
<dbReference type="HOGENOM" id="CLU_087493_0_0_1"/>
<dbReference type="InParanoid" id="Q9NQ50"/>
<dbReference type="OMA" id="KEWARYK"/>
<dbReference type="OrthoDB" id="5977625at2759"/>
<dbReference type="PAN-GO" id="Q9NQ50">
    <property type="GO annotations" value="1 GO annotation based on evolutionary models"/>
</dbReference>
<dbReference type="PhylomeDB" id="Q9NQ50"/>
<dbReference type="TreeFam" id="TF105982"/>
<dbReference type="PathwayCommons" id="Q9NQ50"/>
<dbReference type="Reactome" id="R-HSA-5368286">
    <property type="pathway name" value="Mitochondrial translation initiation"/>
</dbReference>
<dbReference type="Reactome" id="R-HSA-5389840">
    <property type="pathway name" value="Mitochondrial translation elongation"/>
</dbReference>
<dbReference type="Reactome" id="R-HSA-5419276">
    <property type="pathway name" value="Mitochondrial translation termination"/>
</dbReference>
<dbReference type="SignaLink" id="Q9NQ50"/>
<dbReference type="SIGNOR" id="Q9NQ50"/>
<dbReference type="BioGRID-ORCS" id="64976">
    <property type="hits" value="263 hits in 1166 CRISPR screens"/>
</dbReference>
<dbReference type="ChiTaRS" id="MRPL40">
    <property type="organism name" value="human"/>
</dbReference>
<dbReference type="EvolutionaryTrace" id="Q9NQ50"/>
<dbReference type="GeneWiki" id="MRPL40"/>
<dbReference type="GenomeRNAi" id="64976"/>
<dbReference type="Pharos" id="Q9NQ50">
    <property type="development level" value="Tbio"/>
</dbReference>
<dbReference type="PRO" id="PR:Q9NQ50"/>
<dbReference type="Proteomes" id="UP000005640">
    <property type="component" value="Chromosome 22"/>
</dbReference>
<dbReference type="RNAct" id="Q9NQ50">
    <property type="molecule type" value="protein"/>
</dbReference>
<dbReference type="Bgee" id="ENSG00000185608">
    <property type="expression patterns" value="Expressed in skeletal muscle tissue of rectus abdominis and 216 other cell types or tissues"/>
</dbReference>
<dbReference type="GO" id="GO:0005743">
    <property type="term" value="C:mitochondrial inner membrane"/>
    <property type="evidence" value="ECO:0000304"/>
    <property type="project" value="Reactome"/>
</dbReference>
<dbReference type="GO" id="GO:0005762">
    <property type="term" value="C:mitochondrial large ribosomal subunit"/>
    <property type="evidence" value="ECO:0000314"/>
    <property type="project" value="UniProtKB"/>
</dbReference>
<dbReference type="GO" id="GO:0005761">
    <property type="term" value="C:mitochondrial ribosome"/>
    <property type="evidence" value="ECO:0000250"/>
    <property type="project" value="UniProtKB"/>
</dbReference>
<dbReference type="GO" id="GO:0005739">
    <property type="term" value="C:mitochondrion"/>
    <property type="evidence" value="ECO:0000314"/>
    <property type="project" value="UniProtKB"/>
</dbReference>
<dbReference type="GO" id="GO:0005730">
    <property type="term" value="C:nucleolus"/>
    <property type="evidence" value="ECO:0000314"/>
    <property type="project" value="HPA"/>
</dbReference>
<dbReference type="GO" id="GO:0005634">
    <property type="term" value="C:nucleus"/>
    <property type="evidence" value="ECO:0000304"/>
    <property type="project" value="ProtInc"/>
</dbReference>
<dbReference type="GO" id="GO:0003723">
    <property type="term" value="F:RNA binding"/>
    <property type="evidence" value="ECO:0007005"/>
    <property type="project" value="UniProtKB"/>
</dbReference>
<dbReference type="GO" id="GO:0009653">
    <property type="term" value="P:anatomical structure morphogenesis"/>
    <property type="evidence" value="ECO:0000304"/>
    <property type="project" value="ProtInc"/>
</dbReference>
<dbReference type="GO" id="GO:0032543">
    <property type="term" value="P:mitochondrial translation"/>
    <property type="evidence" value="ECO:0000303"/>
    <property type="project" value="ComplexPortal"/>
</dbReference>
<dbReference type="FunFam" id="6.10.250.3440:FF:000001">
    <property type="entry name" value="Mitochondrial ribosomal protein L40"/>
    <property type="match status" value="1"/>
</dbReference>
<dbReference type="Gene3D" id="6.10.250.3440">
    <property type="match status" value="1"/>
</dbReference>
<dbReference type="InterPro" id="IPR019192">
    <property type="entry name" value="Ribosomal_mL40"/>
</dbReference>
<dbReference type="InterPro" id="IPR039145">
    <property type="entry name" value="Ribosomal_mL40_metazoa/plant"/>
</dbReference>
<dbReference type="PANTHER" id="PTHR13359">
    <property type="entry name" value="39S RIBOSOMAL PROTEIN L40, MITOCHONDRIAL"/>
    <property type="match status" value="1"/>
</dbReference>
<dbReference type="PANTHER" id="PTHR13359:SF2">
    <property type="entry name" value="LARGE RIBOSOMAL SUBUNIT PROTEIN ML40"/>
    <property type="match status" value="1"/>
</dbReference>
<dbReference type="Pfam" id="PF09812">
    <property type="entry name" value="MRP-L28"/>
    <property type="match status" value="1"/>
</dbReference>
<protein>
    <recommendedName>
        <fullName evidence="7">Large ribosomal subunit protein mL40</fullName>
    </recommendedName>
    <alternativeName>
        <fullName>39S ribosomal protein L40, mitochondrial</fullName>
        <shortName>L40mt</shortName>
        <shortName>MRP-L40</shortName>
    </alternativeName>
    <alternativeName>
        <fullName>Nuclear localization signal-containing protein deleted in velocardiofacial syndrome</fullName>
    </alternativeName>
    <alternativeName>
        <fullName>Up-regulated in metastasis</fullName>
    </alternativeName>
</protein>
<reference key="1">
    <citation type="journal article" date="1998" name="Genomics">
        <title>Isolation and characterization of a human gene containing a nuclear localization signal from the critical region for velo-cardio-facial syndrome on 22q11.</title>
        <authorList>
            <person name="Funke B."/>
            <person name="Puech A."/>
            <person name="Saint-Jore B."/>
            <person name="Pandita R."/>
            <person name="Skoultchi A."/>
            <person name="Morrow B."/>
        </authorList>
    </citation>
    <scope>NUCLEOTIDE SEQUENCE [MRNA]</scope>
    <scope>TISSUE SPECIFICITY</scope>
    <scope>VARIANTS PRO-11 AND HIS-129</scope>
</reference>
<reference key="2">
    <citation type="journal article" date="1999" name="Anticancer Res.">
        <title>Identification of URIM, a novel gene up-regulated in metastasis.</title>
        <authorList>
            <person name="Hildebrandt T."/>
            <person name="Weidle U.H."/>
            <person name="Preiherr J."/>
            <person name="van Muijen G.N.P."/>
            <person name="Klostermann S."/>
            <person name="Kaul S."/>
            <person name="Zendman A.J.W."/>
        </authorList>
    </citation>
    <scope>NUCLEOTIDE SEQUENCE [MRNA]</scope>
</reference>
<reference key="3">
    <citation type="journal article" date="2004" name="Genome Biol.">
        <title>A genome annotation-driven approach to cloning the human ORFeome.</title>
        <authorList>
            <person name="Collins J.E."/>
            <person name="Wright C.L."/>
            <person name="Edwards C.A."/>
            <person name="Davis M.P."/>
            <person name="Grinham J.A."/>
            <person name="Cole C.G."/>
            <person name="Goward M.E."/>
            <person name="Aguado B."/>
            <person name="Mallya M."/>
            <person name="Mokrab Y."/>
            <person name="Huckle E.J."/>
            <person name="Beare D.M."/>
            <person name="Dunham I."/>
        </authorList>
    </citation>
    <scope>NUCLEOTIDE SEQUENCE [LARGE SCALE MRNA]</scope>
</reference>
<reference key="4">
    <citation type="journal article" date="2004" name="Nat. Genet.">
        <title>Complete sequencing and characterization of 21,243 full-length human cDNAs.</title>
        <authorList>
            <person name="Ota T."/>
            <person name="Suzuki Y."/>
            <person name="Nishikawa T."/>
            <person name="Otsuki T."/>
            <person name="Sugiyama T."/>
            <person name="Irie R."/>
            <person name="Wakamatsu A."/>
            <person name="Hayashi K."/>
            <person name="Sato H."/>
            <person name="Nagai K."/>
            <person name="Kimura K."/>
            <person name="Makita H."/>
            <person name="Sekine M."/>
            <person name="Obayashi M."/>
            <person name="Nishi T."/>
            <person name="Shibahara T."/>
            <person name="Tanaka T."/>
            <person name="Ishii S."/>
            <person name="Yamamoto J."/>
            <person name="Saito K."/>
            <person name="Kawai Y."/>
            <person name="Isono Y."/>
            <person name="Nakamura Y."/>
            <person name="Nagahari K."/>
            <person name="Murakami K."/>
            <person name="Yasuda T."/>
            <person name="Iwayanagi T."/>
            <person name="Wagatsuma M."/>
            <person name="Shiratori A."/>
            <person name="Sudo H."/>
            <person name="Hosoiri T."/>
            <person name="Kaku Y."/>
            <person name="Kodaira H."/>
            <person name="Kondo H."/>
            <person name="Sugawara M."/>
            <person name="Takahashi M."/>
            <person name="Kanda K."/>
            <person name="Yokoi T."/>
            <person name="Furuya T."/>
            <person name="Kikkawa E."/>
            <person name="Omura Y."/>
            <person name="Abe K."/>
            <person name="Kamihara K."/>
            <person name="Katsuta N."/>
            <person name="Sato K."/>
            <person name="Tanikawa M."/>
            <person name="Yamazaki M."/>
            <person name="Ninomiya K."/>
            <person name="Ishibashi T."/>
            <person name="Yamashita H."/>
            <person name="Murakawa K."/>
            <person name="Fujimori K."/>
            <person name="Tanai H."/>
            <person name="Kimata M."/>
            <person name="Watanabe M."/>
            <person name="Hiraoka S."/>
            <person name="Chiba Y."/>
            <person name="Ishida S."/>
            <person name="Ono Y."/>
            <person name="Takiguchi S."/>
            <person name="Watanabe S."/>
            <person name="Yosida M."/>
            <person name="Hotuta T."/>
            <person name="Kusano J."/>
            <person name="Kanehori K."/>
            <person name="Takahashi-Fujii A."/>
            <person name="Hara H."/>
            <person name="Tanase T.-O."/>
            <person name="Nomura Y."/>
            <person name="Togiya S."/>
            <person name="Komai F."/>
            <person name="Hara R."/>
            <person name="Takeuchi K."/>
            <person name="Arita M."/>
            <person name="Imose N."/>
            <person name="Musashino K."/>
            <person name="Yuuki H."/>
            <person name="Oshima A."/>
            <person name="Sasaki N."/>
            <person name="Aotsuka S."/>
            <person name="Yoshikawa Y."/>
            <person name="Matsunawa H."/>
            <person name="Ichihara T."/>
            <person name="Shiohata N."/>
            <person name="Sano S."/>
            <person name="Moriya S."/>
            <person name="Momiyama H."/>
            <person name="Satoh N."/>
            <person name="Takami S."/>
            <person name="Terashima Y."/>
            <person name="Suzuki O."/>
            <person name="Nakagawa S."/>
            <person name="Senoh A."/>
            <person name="Mizoguchi H."/>
            <person name="Goto Y."/>
            <person name="Shimizu F."/>
            <person name="Wakebe H."/>
            <person name="Hishigaki H."/>
            <person name="Watanabe T."/>
            <person name="Sugiyama A."/>
            <person name="Takemoto M."/>
            <person name="Kawakami B."/>
            <person name="Yamazaki M."/>
            <person name="Watanabe K."/>
            <person name="Kumagai A."/>
            <person name="Itakura S."/>
            <person name="Fukuzumi Y."/>
            <person name="Fujimori Y."/>
            <person name="Komiyama M."/>
            <person name="Tashiro H."/>
            <person name="Tanigami A."/>
            <person name="Fujiwara T."/>
            <person name="Ono T."/>
            <person name="Yamada K."/>
            <person name="Fujii Y."/>
            <person name="Ozaki K."/>
            <person name="Hirao M."/>
            <person name="Ohmori Y."/>
            <person name="Kawabata A."/>
            <person name="Hikiji T."/>
            <person name="Kobatake N."/>
            <person name="Inagaki H."/>
            <person name="Ikema Y."/>
            <person name="Okamoto S."/>
            <person name="Okitani R."/>
            <person name="Kawakami T."/>
            <person name="Noguchi S."/>
            <person name="Itoh T."/>
            <person name="Shigeta K."/>
            <person name="Senba T."/>
            <person name="Matsumura K."/>
            <person name="Nakajima Y."/>
            <person name="Mizuno T."/>
            <person name="Morinaga M."/>
            <person name="Sasaki M."/>
            <person name="Togashi T."/>
            <person name="Oyama M."/>
            <person name="Hata H."/>
            <person name="Watanabe M."/>
            <person name="Komatsu T."/>
            <person name="Mizushima-Sugano J."/>
            <person name="Satoh T."/>
            <person name="Shirai Y."/>
            <person name="Takahashi Y."/>
            <person name="Nakagawa K."/>
            <person name="Okumura K."/>
            <person name="Nagase T."/>
            <person name="Nomura N."/>
            <person name="Kikuchi H."/>
            <person name="Masuho Y."/>
            <person name="Yamashita R."/>
            <person name="Nakai K."/>
            <person name="Yada T."/>
            <person name="Nakamura Y."/>
            <person name="Ohara O."/>
            <person name="Isogai T."/>
            <person name="Sugano S."/>
        </authorList>
    </citation>
    <scope>NUCLEOTIDE SEQUENCE [LARGE SCALE MRNA]</scope>
</reference>
<reference key="5">
    <citation type="submission" date="2005-09" db="EMBL/GenBank/DDBJ databases">
        <authorList>
            <person name="Mural R.J."/>
            <person name="Istrail S."/>
            <person name="Sutton G.G."/>
            <person name="Florea L."/>
            <person name="Halpern A.L."/>
            <person name="Mobarry C.M."/>
            <person name="Lippert R."/>
            <person name="Walenz B."/>
            <person name="Shatkay H."/>
            <person name="Dew I."/>
            <person name="Miller J.R."/>
            <person name="Flanigan M.J."/>
            <person name="Edwards N.J."/>
            <person name="Bolanos R."/>
            <person name="Fasulo D."/>
            <person name="Halldorsson B.V."/>
            <person name="Hannenhalli S."/>
            <person name="Turner R."/>
            <person name="Yooseph S."/>
            <person name="Lu F."/>
            <person name="Nusskern D.R."/>
            <person name="Shue B.C."/>
            <person name="Zheng X.H."/>
            <person name="Zhong F."/>
            <person name="Delcher A.L."/>
            <person name="Huson D.H."/>
            <person name="Kravitz S.A."/>
            <person name="Mouchard L."/>
            <person name="Reinert K."/>
            <person name="Remington K.A."/>
            <person name="Clark A.G."/>
            <person name="Waterman M.S."/>
            <person name="Eichler E.E."/>
            <person name="Adams M.D."/>
            <person name="Hunkapiller M.W."/>
            <person name="Myers E.W."/>
            <person name="Venter J.C."/>
        </authorList>
    </citation>
    <scope>NUCLEOTIDE SEQUENCE [LARGE SCALE GENOMIC DNA]</scope>
</reference>
<reference key="6">
    <citation type="journal article" date="2004" name="Genome Res.">
        <title>The status, quality, and expansion of the NIH full-length cDNA project: the Mammalian Gene Collection (MGC).</title>
        <authorList>
            <consortium name="The MGC Project Team"/>
        </authorList>
    </citation>
    <scope>NUCLEOTIDE SEQUENCE [LARGE SCALE MRNA]</scope>
    <source>
        <tissue>Lung</tissue>
    </source>
</reference>
<reference key="7">
    <citation type="journal article" date="2011" name="BMC Syst. Biol.">
        <title>Initial characterization of the human central proteome.</title>
        <authorList>
            <person name="Burkard T.R."/>
            <person name="Planyavsky M."/>
            <person name="Kaupe I."/>
            <person name="Breitwieser F.P."/>
            <person name="Buerckstuemmer T."/>
            <person name="Bennett K.L."/>
            <person name="Superti-Furga G."/>
            <person name="Colinge J."/>
        </authorList>
    </citation>
    <scope>IDENTIFICATION BY MASS SPECTROMETRY [LARGE SCALE ANALYSIS]</scope>
</reference>
<reference key="8">
    <citation type="journal article" date="2015" name="Proteomics">
        <title>N-terminome analysis of the human mitochondrial proteome.</title>
        <authorList>
            <person name="Vaca Jacome A.S."/>
            <person name="Rabilloud T."/>
            <person name="Schaeffer-Reiss C."/>
            <person name="Rompais M."/>
            <person name="Ayoub D."/>
            <person name="Lane L."/>
            <person name="Bairoch A."/>
            <person name="Van Dorsselaer A."/>
            <person name="Carapito C."/>
        </authorList>
    </citation>
    <scope>IDENTIFICATION BY MASS SPECTROMETRY [LARGE SCALE ANALYSIS]</scope>
</reference>
<reference evidence="9" key="9">
    <citation type="journal article" date="2014" name="Science">
        <title>Structure of the large ribosomal subunit from human mitochondria.</title>
        <authorList>
            <person name="Brown A."/>
            <person name="Amunts A."/>
            <person name="Bai X.C."/>
            <person name="Sugimoto Y."/>
            <person name="Edwards P.C."/>
            <person name="Murshudov G."/>
            <person name="Scheres S.H."/>
            <person name="Ramakrishnan V."/>
        </authorList>
    </citation>
    <scope>STRUCTURE BY ELECTRON MICROSCOPY (3.40 ANGSTROMS)</scope>
    <scope>SUBCELLULAR LOCATION</scope>
    <scope>SUBUNIT</scope>
</reference>
<reference evidence="10" key="10">
    <citation type="journal article" date="2015" name="Science">
        <title>Ribosome. The structure of the human mitochondrial ribosome.</title>
        <authorList>
            <person name="Amunts A."/>
            <person name="Brown A."/>
            <person name="Toots J."/>
            <person name="Scheres S.H."/>
            <person name="Ramakrishnan V."/>
        </authorList>
    </citation>
    <scope>STRUCTURE BY ELECTRON MICROSCOPY (3.50 ANGSTROMS)</scope>
    <scope>SUBCELLULAR LOCATION</scope>
    <scope>SUBUNIT</scope>
</reference>
<reference evidence="11 12" key="11">
    <citation type="journal article" date="2017" name="Nat. Struct. Mol. Biol.">
        <title>Structures of the human mitochondrial ribosome in native states of assembly.</title>
        <authorList>
            <person name="Brown A."/>
            <person name="Rathore S."/>
            <person name="Kimanius D."/>
            <person name="Aibara S."/>
            <person name="Bai X.C."/>
            <person name="Rorbach J."/>
            <person name="Amunts A."/>
            <person name="Ramakrishnan V."/>
        </authorList>
    </citation>
    <scope>STRUCTURE BY ELECTRON MICROSCOPY (3.03 ANGSTROMS)</scope>
    <scope>SUBCELLULAR LOCATION</scope>
    <scope>SUBUNIT</scope>
</reference>
<sequence length="206" mass="24490">MTASVLRSISLALRPTSGLLGTWQTQLRETHQRASLLSFWELIPMRSEPLRKKKKVDPKKDQEAKERLKRKIRKLEKATQELIPIEDFITPLKFLDKARERPQVELTFEETERRALLLKKWSLYKQQERKMERDTIRAMLEAQQEALEELQLESPKLHAEAIKRDPNLFPFEKEGPHYTPPIPNYQPPEGRYNDITKVYTQVEFKR</sequence>
<accession>Q9NQ50</accession>
<accession>B3KVZ7</accession>
<accession>O95134</accession>